<dbReference type="EC" id="6.2.1.5" evidence="1"/>
<dbReference type="EMBL" id="CP001277">
    <property type="protein sequence ID" value="ACQ68480.1"/>
    <property type="molecule type" value="Genomic_DNA"/>
</dbReference>
<dbReference type="RefSeq" id="WP_015874244.1">
    <property type="nucleotide sequence ID" value="NC_012751.1"/>
</dbReference>
<dbReference type="SMR" id="C4K7D7"/>
<dbReference type="STRING" id="572265.HDEF_1889"/>
<dbReference type="GeneID" id="66261470"/>
<dbReference type="KEGG" id="hde:HDEF_1889"/>
<dbReference type="eggNOG" id="COG0045">
    <property type="taxonomic scope" value="Bacteria"/>
</dbReference>
<dbReference type="HOGENOM" id="CLU_037430_0_2_6"/>
<dbReference type="UniPathway" id="UPA00223">
    <property type="reaction ID" value="UER00999"/>
</dbReference>
<dbReference type="Proteomes" id="UP000002334">
    <property type="component" value="Chromosome"/>
</dbReference>
<dbReference type="GO" id="GO:0005829">
    <property type="term" value="C:cytosol"/>
    <property type="evidence" value="ECO:0007669"/>
    <property type="project" value="TreeGrafter"/>
</dbReference>
<dbReference type="GO" id="GO:0042709">
    <property type="term" value="C:succinate-CoA ligase complex"/>
    <property type="evidence" value="ECO:0007669"/>
    <property type="project" value="TreeGrafter"/>
</dbReference>
<dbReference type="GO" id="GO:0005524">
    <property type="term" value="F:ATP binding"/>
    <property type="evidence" value="ECO:0007669"/>
    <property type="project" value="UniProtKB-UniRule"/>
</dbReference>
<dbReference type="GO" id="GO:0000287">
    <property type="term" value="F:magnesium ion binding"/>
    <property type="evidence" value="ECO:0007669"/>
    <property type="project" value="UniProtKB-UniRule"/>
</dbReference>
<dbReference type="GO" id="GO:0004775">
    <property type="term" value="F:succinate-CoA ligase (ADP-forming) activity"/>
    <property type="evidence" value="ECO:0007669"/>
    <property type="project" value="UniProtKB-UniRule"/>
</dbReference>
<dbReference type="GO" id="GO:0004776">
    <property type="term" value="F:succinate-CoA ligase (GDP-forming) activity"/>
    <property type="evidence" value="ECO:0007669"/>
    <property type="project" value="RHEA"/>
</dbReference>
<dbReference type="GO" id="GO:0006104">
    <property type="term" value="P:succinyl-CoA metabolic process"/>
    <property type="evidence" value="ECO:0007669"/>
    <property type="project" value="TreeGrafter"/>
</dbReference>
<dbReference type="GO" id="GO:0006099">
    <property type="term" value="P:tricarboxylic acid cycle"/>
    <property type="evidence" value="ECO:0007669"/>
    <property type="project" value="UniProtKB-UniRule"/>
</dbReference>
<dbReference type="FunFam" id="3.30.1490.20:FF:000002">
    <property type="entry name" value="Succinate--CoA ligase [ADP-forming] subunit beta"/>
    <property type="match status" value="1"/>
</dbReference>
<dbReference type="FunFam" id="3.30.470.20:FF:000002">
    <property type="entry name" value="Succinate--CoA ligase [ADP-forming] subunit beta"/>
    <property type="match status" value="1"/>
</dbReference>
<dbReference type="FunFam" id="3.40.50.261:FF:000001">
    <property type="entry name" value="Succinate--CoA ligase [ADP-forming] subunit beta"/>
    <property type="match status" value="1"/>
</dbReference>
<dbReference type="Gene3D" id="3.30.1490.20">
    <property type="entry name" value="ATP-grasp fold, A domain"/>
    <property type="match status" value="1"/>
</dbReference>
<dbReference type="Gene3D" id="3.30.470.20">
    <property type="entry name" value="ATP-grasp fold, B domain"/>
    <property type="match status" value="1"/>
</dbReference>
<dbReference type="Gene3D" id="3.40.50.261">
    <property type="entry name" value="Succinyl-CoA synthetase domains"/>
    <property type="match status" value="1"/>
</dbReference>
<dbReference type="HAMAP" id="MF_00558">
    <property type="entry name" value="Succ_CoA_beta"/>
    <property type="match status" value="1"/>
</dbReference>
<dbReference type="InterPro" id="IPR011761">
    <property type="entry name" value="ATP-grasp"/>
</dbReference>
<dbReference type="InterPro" id="IPR013650">
    <property type="entry name" value="ATP-grasp_succ-CoA_synth-type"/>
</dbReference>
<dbReference type="InterPro" id="IPR013815">
    <property type="entry name" value="ATP_grasp_subdomain_1"/>
</dbReference>
<dbReference type="InterPro" id="IPR017866">
    <property type="entry name" value="Succ-CoA_synthase_bsu_CS"/>
</dbReference>
<dbReference type="InterPro" id="IPR005811">
    <property type="entry name" value="SUCC_ACL_C"/>
</dbReference>
<dbReference type="InterPro" id="IPR005809">
    <property type="entry name" value="Succ_CoA_ligase-like_bsu"/>
</dbReference>
<dbReference type="InterPro" id="IPR016102">
    <property type="entry name" value="Succinyl-CoA_synth-like"/>
</dbReference>
<dbReference type="NCBIfam" id="NF001913">
    <property type="entry name" value="PRK00696.1"/>
    <property type="match status" value="1"/>
</dbReference>
<dbReference type="NCBIfam" id="TIGR01016">
    <property type="entry name" value="sucCoAbeta"/>
    <property type="match status" value="1"/>
</dbReference>
<dbReference type="PANTHER" id="PTHR11815:SF10">
    <property type="entry name" value="SUCCINATE--COA LIGASE [GDP-FORMING] SUBUNIT BETA, MITOCHONDRIAL"/>
    <property type="match status" value="1"/>
</dbReference>
<dbReference type="PANTHER" id="PTHR11815">
    <property type="entry name" value="SUCCINYL-COA SYNTHETASE BETA CHAIN"/>
    <property type="match status" value="1"/>
</dbReference>
<dbReference type="Pfam" id="PF08442">
    <property type="entry name" value="ATP-grasp_2"/>
    <property type="match status" value="1"/>
</dbReference>
<dbReference type="Pfam" id="PF00549">
    <property type="entry name" value="Ligase_CoA"/>
    <property type="match status" value="1"/>
</dbReference>
<dbReference type="PIRSF" id="PIRSF001554">
    <property type="entry name" value="SucCS_beta"/>
    <property type="match status" value="1"/>
</dbReference>
<dbReference type="SUPFAM" id="SSF56059">
    <property type="entry name" value="Glutathione synthetase ATP-binding domain-like"/>
    <property type="match status" value="1"/>
</dbReference>
<dbReference type="SUPFAM" id="SSF52210">
    <property type="entry name" value="Succinyl-CoA synthetase domains"/>
    <property type="match status" value="1"/>
</dbReference>
<dbReference type="PROSITE" id="PS50975">
    <property type="entry name" value="ATP_GRASP"/>
    <property type="match status" value="1"/>
</dbReference>
<dbReference type="PROSITE" id="PS01217">
    <property type="entry name" value="SUCCINYL_COA_LIG_3"/>
    <property type="match status" value="1"/>
</dbReference>
<comment type="function">
    <text evidence="1">Succinyl-CoA synthetase functions in the citric acid cycle (TCA), coupling the hydrolysis of succinyl-CoA to the synthesis of either ATP or GTP and thus represents the only step of substrate-level phosphorylation in the TCA. The beta subunit provides nucleotide specificity of the enzyme and binds the substrate succinate, while the binding sites for coenzyme A and phosphate are found in the alpha subunit.</text>
</comment>
<comment type="catalytic activity">
    <reaction evidence="1">
        <text>succinate + ATP + CoA = succinyl-CoA + ADP + phosphate</text>
        <dbReference type="Rhea" id="RHEA:17661"/>
        <dbReference type="ChEBI" id="CHEBI:30031"/>
        <dbReference type="ChEBI" id="CHEBI:30616"/>
        <dbReference type="ChEBI" id="CHEBI:43474"/>
        <dbReference type="ChEBI" id="CHEBI:57287"/>
        <dbReference type="ChEBI" id="CHEBI:57292"/>
        <dbReference type="ChEBI" id="CHEBI:456216"/>
        <dbReference type="EC" id="6.2.1.5"/>
    </reaction>
    <physiologicalReaction direction="right-to-left" evidence="1">
        <dbReference type="Rhea" id="RHEA:17663"/>
    </physiologicalReaction>
</comment>
<comment type="catalytic activity">
    <reaction evidence="1">
        <text>GTP + succinate + CoA = succinyl-CoA + GDP + phosphate</text>
        <dbReference type="Rhea" id="RHEA:22120"/>
        <dbReference type="ChEBI" id="CHEBI:30031"/>
        <dbReference type="ChEBI" id="CHEBI:37565"/>
        <dbReference type="ChEBI" id="CHEBI:43474"/>
        <dbReference type="ChEBI" id="CHEBI:57287"/>
        <dbReference type="ChEBI" id="CHEBI:57292"/>
        <dbReference type="ChEBI" id="CHEBI:58189"/>
    </reaction>
    <physiologicalReaction direction="right-to-left" evidence="1">
        <dbReference type="Rhea" id="RHEA:22122"/>
    </physiologicalReaction>
</comment>
<comment type="cofactor">
    <cofactor evidence="1">
        <name>Mg(2+)</name>
        <dbReference type="ChEBI" id="CHEBI:18420"/>
    </cofactor>
    <text evidence="1">Binds 1 Mg(2+) ion per subunit.</text>
</comment>
<comment type="pathway">
    <text evidence="1">Carbohydrate metabolism; tricarboxylic acid cycle; succinate from succinyl-CoA (ligase route): step 1/1.</text>
</comment>
<comment type="subunit">
    <text evidence="1">Heterotetramer of two alpha and two beta subunits.</text>
</comment>
<comment type="similarity">
    <text evidence="1">Belongs to the succinate/malate CoA ligase beta subunit family.</text>
</comment>
<evidence type="ECO:0000255" key="1">
    <source>
        <dbReference type="HAMAP-Rule" id="MF_00558"/>
    </source>
</evidence>
<proteinExistence type="inferred from homology"/>
<name>SUCC_HAMD5</name>
<reference key="1">
    <citation type="journal article" date="2009" name="Proc. Natl. Acad. Sci. U.S.A.">
        <title>Hamiltonella defensa, genome evolution of protective bacterial endosymbiont from pathogenic ancestors.</title>
        <authorList>
            <person name="Degnan P.H."/>
            <person name="Yu Y."/>
            <person name="Sisneros N."/>
            <person name="Wing R.A."/>
            <person name="Moran N.A."/>
        </authorList>
    </citation>
    <scope>NUCLEOTIDE SEQUENCE [LARGE SCALE GENOMIC DNA]</scope>
    <source>
        <strain>5AT</strain>
    </source>
</reference>
<protein>
    <recommendedName>
        <fullName evidence="1">Succinate--CoA ligase [ADP-forming] subunit beta</fullName>
        <ecNumber evidence="1">6.2.1.5</ecNumber>
    </recommendedName>
    <alternativeName>
        <fullName evidence="1">Succinyl-CoA synthetase subunit beta</fullName>
        <shortName evidence="1">SCS-beta</shortName>
    </alternativeName>
</protein>
<sequence length="388" mass="41749">MNLHEYQAKELFARRGLPVPKGYVCRSAGEAEKATTELGGDLWVAKCQVHAGGRGKSGGVKLCNNPQDVSAFAEQWLGKNLVTYQTDLQGQPVHHILVEAATDIAQELYLGAVIDRSSSRVVFMASTEGGVEIEKVAEKTPHLIHKVTIDPLTGPQPFQGRELAFQLGLTGKKVSQFSQIFMNLAKLFLECDLALLEINPLVITKKEELICLDAKLTVDGNALYRQPELRQIHDVTQEDAREAHAAQFELNYVALEGNIGCMVNGAGLAMGTMDMVKLYGAEPANFLDVGGGATKERVTEAFKIILSDEKVKAILVNIFGGIVRCDLIADGIIAAVAEVGMQIPVVVRLEGNNAKPGAKKLSDSGLNIIAANSLTHAAKQIAAAVKEK</sequence>
<accession>C4K7D7</accession>
<feature type="chain" id="PRO_1000212026" description="Succinate--CoA ligase [ADP-forming] subunit beta">
    <location>
        <begin position="1"/>
        <end position="388"/>
    </location>
</feature>
<feature type="domain" description="ATP-grasp" evidence="1">
    <location>
        <begin position="9"/>
        <end position="244"/>
    </location>
</feature>
<feature type="binding site" evidence="1">
    <location>
        <position position="46"/>
    </location>
    <ligand>
        <name>ATP</name>
        <dbReference type="ChEBI" id="CHEBI:30616"/>
    </ligand>
</feature>
<feature type="binding site" evidence="1">
    <location>
        <begin position="53"/>
        <end position="55"/>
    </location>
    <ligand>
        <name>ATP</name>
        <dbReference type="ChEBI" id="CHEBI:30616"/>
    </ligand>
</feature>
<feature type="binding site" evidence="1">
    <location>
        <position position="99"/>
    </location>
    <ligand>
        <name>ATP</name>
        <dbReference type="ChEBI" id="CHEBI:30616"/>
    </ligand>
</feature>
<feature type="binding site" evidence="1">
    <location>
        <position position="102"/>
    </location>
    <ligand>
        <name>ATP</name>
        <dbReference type="ChEBI" id="CHEBI:30616"/>
    </ligand>
</feature>
<feature type="binding site" evidence="1">
    <location>
        <position position="107"/>
    </location>
    <ligand>
        <name>ATP</name>
        <dbReference type="ChEBI" id="CHEBI:30616"/>
    </ligand>
</feature>
<feature type="binding site" evidence="1">
    <location>
        <position position="199"/>
    </location>
    <ligand>
        <name>Mg(2+)</name>
        <dbReference type="ChEBI" id="CHEBI:18420"/>
    </ligand>
</feature>
<feature type="binding site" evidence="1">
    <location>
        <position position="213"/>
    </location>
    <ligand>
        <name>Mg(2+)</name>
        <dbReference type="ChEBI" id="CHEBI:18420"/>
    </ligand>
</feature>
<feature type="binding site" evidence="1">
    <location>
        <position position="264"/>
    </location>
    <ligand>
        <name>substrate</name>
        <note>ligand shared with subunit alpha</note>
    </ligand>
</feature>
<feature type="binding site" evidence="1">
    <location>
        <begin position="321"/>
        <end position="323"/>
    </location>
    <ligand>
        <name>substrate</name>
        <note>ligand shared with subunit alpha</note>
    </ligand>
</feature>
<gene>
    <name evidence="1" type="primary">sucC</name>
    <name type="ordered locus">HDEF_1889</name>
</gene>
<organism>
    <name type="scientific">Hamiltonella defensa subsp. Acyrthosiphon pisum (strain 5AT)</name>
    <dbReference type="NCBI Taxonomy" id="572265"/>
    <lineage>
        <taxon>Bacteria</taxon>
        <taxon>Pseudomonadati</taxon>
        <taxon>Pseudomonadota</taxon>
        <taxon>Gammaproteobacteria</taxon>
        <taxon>Enterobacterales</taxon>
        <taxon>Enterobacteriaceae</taxon>
        <taxon>aphid secondary symbionts</taxon>
        <taxon>Candidatus Hamiltonella</taxon>
    </lineage>
</organism>
<keyword id="KW-0067">ATP-binding</keyword>
<keyword id="KW-0436">Ligase</keyword>
<keyword id="KW-0460">Magnesium</keyword>
<keyword id="KW-0479">Metal-binding</keyword>
<keyword id="KW-0547">Nucleotide-binding</keyword>
<keyword id="KW-0816">Tricarboxylic acid cycle</keyword>